<proteinExistence type="evidence at protein level"/>
<organism>
    <name type="scientific">African swine fever virus (isolate Pig/Portugal/OURT88/1988)</name>
    <name type="common">ASFV</name>
    <dbReference type="NCBI Taxonomy" id="443878"/>
    <lineage>
        <taxon>Viruses</taxon>
        <taxon>Varidnaviria</taxon>
        <taxon>Bamfordvirae</taxon>
        <taxon>Nucleocytoviricota</taxon>
        <taxon>Pokkesviricetes</taxon>
        <taxon>Asfuvirales</taxon>
        <taxon>Asfarviridae</taxon>
        <taxon>Asfivirus</taxon>
        <taxon>African swine fever virus</taxon>
    </lineage>
</organism>
<name>1102L_ASFPP</name>
<gene>
    <name evidence="4" type="primary">MGF 110-2L</name>
</gene>
<reference key="1">
    <citation type="journal article" date="2008" name="J. Gen. Virol.">
        <title>Comparison of the genome sequences of non-pathogenic and pathogenic African swine fever virus isolates.</title>
        <authorList>
            <person name="Chapman D.A.G."/>
            <person name="Tcherepanov V."/>
            <person name="Upton C."/>
            <person name="Dixon L.K."/>
        </authorList>
    </citation>
    <scope>NUCLEOTIDE SEQUENCE [LARGE SCALE GENOMIC DNA]</scope>
    <source>
        <strain evidence="4">OURT 88/3</strain>
    </source>
</reference>
<reference key="2">
    <citation type="journal article" date="2018" name="Sci. Rep.">
        <title>The intracellular proteome of African swine fever virus.</title>
        <authorList>
            <person name="Kessler C."/>
            <person name="Forth J.H."/>
            <person name="Keil G.M."/>
            <person name="Mettenleiter T.C."/>
            <person name="Blome S."/>
            <person name="Karger A."/>
        </authorList>
    </citation>
    <scope>SIGNAL SEQUENCE CLEAVAGE SITE</scope>
</reference>
<dbReference type="EMBL" id="AM712240">
    <property type="protein sequence ID" value="CAN10357.1"/>
    <property type="molecule type" value="Genomic_DNA"/>
</dbReference>
<dbReference type="RefSeq" id="YP_009703617.1">
    <property type="nucleotide sequence ID" value="NC_044957.1"/>
</dbReference>
<dbReference type="GeneID" id="41902426"/>
<dbReference type="Proteomes" id="UP000108903">
    <property type="component" value="Segment"/>
</dbReference>
<dbReference type="InterPro" id="IPR004848">
    <property type="entry name" value="ASFV_fam_110"/>
</dbReference>
<dbReference type="Pfam" id="PF01639">
    <property type="entry name" value="v110"/>
    <property type="match status" value="1"/>
</dbReference>
<evidence type="ECO:0000250" key="1"/>
<evidence type="ECO:0000269" key="2">
    <source>
    </source>
</evidence>
<evidence type="ECO:0000305" key="3"/>
<evidence type="ECO:0000312" key="4">
    <source>
        <dbReference type="EMBL" id="CAN10357.1"/>
    </source>
</evidence>
<accession>A9JLI3</accession>
<feature type="signal peptide" evidence="2">
    <location>
        <begin position="1"/>
        <end position="31"/>
    </location>
</feature>
<feature type="chain" id="PRO_0000454841" description="Protein MGF 110-2L">
    <location>
        <begin position="32"/>
        <end position="104"/>
    </location>
</feature>
<protein>
    <recommendedName>
        <fullName>Protein MGF 110-2L</fullName>
    </recommendedName>
</protein>
<keyword id="KW-0244">Early protein</keyword>
<keyword id="KW-0732">Signal</keyword>
<comment type="function">
    <text evidence="1">Plays a role in virus cell tropism, and may be required for efficient virus replication in macrophages.</text>
</comment>
<comment type="similarity">
    <text evidence="3">Belongs to the asfivirus MGF 110 family.</text>
</comment>
<organismHost>
    <name type="scientific">Ornithodoros</name>
    <name type="common">relapsing fever ticks</name>
    <dbReference type="NCBI Taxonomy" id="6937"/>
</organismHost>
<organismHost>
    <name type="scientific">Sus scrofa</name>
    <name type="common">Pig</name>
    <dbReference type="NCBI Taxonomy" id="9823"/>
</organismHost>
<sequence>MRFFSYLGLLLAGLTSLQGFSTDNLLEEELRYWCQYVKNCRFCWTCQDGLCKNKVLKDMSSVQEHSYPMKHCMIHRQCKYIRDGPIFQVECTIQTSDATHLINA</sequence>